<name>TRY1_CHICK</name>
<sequence>MKFLVLVAFVGVTVAFPISDEDDDKIVGGYSCARSAAPYQVSLNSGYHFCGGSLISSQWVLSAAHCYKSSIQVKLGEYNLAAQDGSEQTISSSKVIRHSGYNANTLNNDIMLIKLSKAATLNSYVNTVPLPTSCVTAGTTCLISGWGNTLSSGSLYPDVLQCLNAPVLSSSQCSSAYPGRITSNMICIGYLNGGKDSCQGDSGGPVVCNGQLQGIVSWGIGCAQKGYPGVYTKVCNYVSWIKTTMSSN</sequence>
<dbReference type="EC" id="3.4.21.4"/>
<dbReference type="EMBL" id="U15155">
    <property type="protein sequence ID" value="AAA79912.1"/>
    <property type="molecule type" value="mRNA"/>
</dbReference>
<dbReference type="PIR" id="S55067">
    <property type="entry name" value="S55067"/>
</dbReference>
<dbReference type="RefSeq" id="NP_990716.1">
    <property type="nucleotide sequence ID" value="NM_205385.1"/>
</dbReference>
<dbReference type="SMR" id="Q90627"/>
<dbReference type="FunCoup" id="Q90627">
    <property type="interactions" value="47"/>
</dbReference>
<dbReference type="GeneID" id="396345"/>
<dbReference type="KEGG" id="gga:396345"/>
<dbReference type="CTD" id="5646"/>
<dbReference type="VEuPathDB" id="HostDB:geneid_396345"/>
<dbReference type="eggNOG" id="KOG3627">
    <property type="taxonomic scope" value="Eukaryota"/>
</dbReference>
<dbReference type="InParanoid" id="Q90627"/>
<dbReference type="OrthoDB" id="10059102at2759"/>
<dbReference type="PhylomeDB" id="Q90627"/>
<dbReference type="PRO" id="PR:Q90627"/>
<dbReference type="Proteomes" id="UP000000539">
    <property type="component" value="Unassembled WGS sequence"/>
</dbReference>
<dbReference type="GO" id="GO:0005615">
    <property type="term" value="C:extracellular space"/>
    <property type="evidence" value="ECO:0000318"/>
    <property type="project" value="GO_Central"/>
</dbReference>
<dbReference type="GO" id="GO:0046872">
    <property type="term" value="F:metal ion binding"/>
    <property type="evidence" value="ECO:0007669"/>
    <property type="project" value="UniProtKB-KW"/>
</dbReference>
<dbReference type="GO" id="GO:0004252">
    <property type="term" value="F:serine-type endopeptidase activity"/>
    <property type="evidence" value="ECO:0000318"/>
    <property type="project" value="GO_Central"/>
</dbReference>
<dbReference type="GO" id="GO:0007586">
    <property type="term" value="P:digestion"/>
    <property type="evidence" value="ECO:0007669"/>
    <property type="project" value="UniProtKB-KW"/>
</dbReference>
<dbReference type="GO" id="GO:0006508">
    <property type="term" value="P:proteolysis"/>
    <property type="evidence" value="ECO:0007669"/>
    <property type="project" value="UniProtKB-KW"/>
</dbReference>
<dbReference type="CDD" id="cd00190">
    <property type="entry name" value="Tryp_SPc"/>
    <property type="match status" value="1"/>
</dbReference>
<dbReference type="FunFam" id="2.40.10.10:FF:000008">
    <property type="entry name" value="Cationic trypsin"/>
    <property type="match status" value="1"/>
</dbReference>
<dbReference type="FunFam" id="2.40.10.10:FF:000005">
    <property type="entry name" value="Serine protease 37"/>
    <property type="match status" value="1"/>
</dbReference>
<dbReference type="Gene3D" id="2.40.10.10">
    <property type="entry name" value="Trypsin-like serine proteases"/>
    <property type="match status" value="2"/>
</dbReference>
<dbReference type="InterPro" id="IPR009003">
    <property type="entry name" value="Peptidase_S1_PA"/>
</dbReference>
<dbReference type="InterPro" id="IPR043504">
    <property type="entry name" value="Peptidase_S1_PA_chymotrypsin"/>
</dbReference>
<dbReference type="InterPro" id="IPR001314">
    <property type="entry name" value="Peptidase_S1A"/>
</dbReference>
<dbReference type="InterPro" id="IPR050127">
    <property type="entry name" value="Serine_Proteases_S1"/>
</dbReference>
<dbReference type="InterPro" id="IPR001254">
    <property type="entry name" value="Trypsin_dom"/>
</dbReference>
<dbReference type="InterPro" id="IPR018114">
    <property type="entry name" value="TRYPSIN_HIS"/>
</dbReference>
<dbReference type="InterPro" id="IPR033116">
    <property type="entry name" value="TRYPSIN_SER"/>
</dbReference>
<dbReference type="PANTHER" id="PTHR24264:SF15">
    <property type="entry name" value="RIKEN CDNA 2210010C04 GENE"/>
    <property type="match status" value="1"/>
</dbReference>
<dbReference type="PANTHER" id="PTHR24264">
    <property type="entry name" value="TRYPSIN-RELATED"/>
    <property type="match status" value="1"/>
</dbReference>
<dbReference type="Pfam" id="PF00089">
    <property type="entry name" value="Trypsin"/>
    <property type="match status" value="1"/>
</dbReference>
<dbReference type="PRINTS" id="PR00722">
    <property type="entry name" value="CHYMOTRYPSIN"/>
</dbReference>
<dbReference type="SMART" id="SM00020">
    <property type="entry name" value="Tryp_SPc"/>
    <property type="match status" value="1"/>
</dbReference>
<dbReference type="SUPFAM" id="SSF50494">
    <property type="entry name" value="Trypsin-like serine proteases"/>
    <property type="match status" value="1"/>
</dbReference>
<dbReference type="PROSITE" id="PS50240">
    <property type="entry name" value="TRYPSIN_DOM"/>
    <property type="match status" value="1"/>
</dbReference>
<dbReference type="PROSITE" id="PS00134">
    <property type="entry name" value="TRYPSIN_HIS"/>
    <property type="match status" value="1"/>
</dbReference>
<dbReference type="PROSITE" id="PS00135">
    <property type="entry name" value="TRYPSIN_SER"/>
    <property type="match status" value="1"/>
</dbReference>
<feature type="signal peptide" evidence="1">
    <location>
        <begin position="1"/>
        <end position="15"/>
    </location>
</feature>
<feature type="propeptide" id="PRO_0000028219" description="Activation peptide" evidence="1">
    <location>
        <begin position="16"/>
        <end position="25"/>
    </location>
</feature>
<feature type="chain" id="PRO_0000028220" description="Trypsin I-P1">
    <location>
        <begin position="26"/>
        <end position="248"/>
    </location>
</feature>
<feature type="domain" description="Peptidase S1" evidence="2">
    <location>
        <begin position="26"/>
        <end position="246"/>
    </location>
</feature>
<feature type="active site" description="Charge relay system" evidence="1">
    <location>
        <position position="65"/>
    </location>
</feature>
<feature type="active site" description="Charge relay system" evidence="1">
    <location>
        <position position="109"/>
    </location>
</feature>
<feature type="active site" description="Charge relay system" evidence="1">
    <location>
        <position position="202"/>
    </location>
</feature>
<feature type="binding site" evidence="1">
    <location>
        <position position="77"/>
    </location>
    <ligand>
        <name>Ca(2+)</name>
        <dbReference type="ChEBI" id="CHEBI:29108"/>
    </ligand>
</feature>
<feature type="binding site" evidence="1">
    <location>
        <position position="79"/>
    </location>
    <ligand>
        <name>Ca(2+)</name>
        <dbReference type="ChEBI" id="CHEBI:29108"/>
    </ligand>
</feature>
<feature type="binding site" evidence="1">
    <location>
        <position position="87"/>
    </location>
    <ligand>
        <name>Ca(2+)</name>
        <dbReference type="ChEBI" id="CHEBI:29108"/>
    </ligand>
</feature>
<feature type="site" description="Required for specificity" evidence="1">
    <location>
        <position position="196"/>
    </location>
</feature>
<feature type="disulfide bond" evidence="2">
    <location>
        <begin position="32"/>
        <end position="162"/>
    </location>
</feature>
<feature type="disulfide bond" evidence="2">
    <location>
        <begin position="50"/>
        <end position="66"/>
    </location>
</feature>
<feature type="disulfide bond" evidence="2">
    <location>
        <begin position="134"/>
        <end position="235"/>
    </location>
</feature>
<feature type="disulfide bond" evidence="2">
    <location>
        <begin position="141"/>
        <end position="208"/>
    </location>
</feature>
<feature type="disulfide bond" evidence="2">
    <location>
        <begin position="173"/>
        <end position="187"/>
    </location>
</feature>
<feature type="disulfide bond" evidence="2">
    <location>
        <begin position="198"/>
        <end position="222"/>
    </location>
</feature>
<keyword id="KW-0106">Calcium</keyword>
<keyword id="KW-0222">Digestion</keyword>
<keyword id="KW-1015">Disulfide bond</keyword>
<keyword id="KW-0378">Hydrolase</keyword>
<keyword id="KW-0479">Metal-binding</keyword>
<keyword id="KW-0645">Protease</keyword>
<keyword id="KW-1185">Reference proteome</keyword>
<keyword id="KW-0964">Secreted</keyword>
<keyword id="KW-0720">Serine protease</keyword>
<keyword id="KW-0732">Signal</keyword>
<keyword id="KW-0865">Zymogen</keyword>
<protein>
    <recommendedName>
        <fullName>Trypsin I-P1</fullName>
        <ecNumber>3.4.21.4</ecNumber>
    </recommendedName>
</protein>
<reference key="1">
    <citation type="journal article" date="1995" name="Biochem. J.">
        <title>Isolation and characterization of the chicken trypsinogen gene family.</title>
        <authorList>
            <person name="Wang K."/>
            <person name="Gan L."/>
            <person name="Lee I."/>
            <person name="Hood L.E."/>
        </authorList>
    </citation>
    <scope>NUCLEOTIDE SEQUENCE [MRNA]</scope>
    <source>
        <tissue>Pancreas</tissue>
    </source>
</reference>
<proteinExistence type="evidence at transcript level"/>
<organism>
    <name type="scientific">Gallus gallus</name>
    <name type="common">Chicken</name>
    <dbReference type="NCBI Taxonomy" id="9031"/>
    <lineage>
        <taxon>Eukaryota</taxon>
        <taxon>Metazoa</taxon>
        <taxon>Chordata</taxon>
        <taxon>Craniata</taxon>
        <taxon>Vertebrata</taxon>
        <taxon>Euteleostomi</taxon>
        <taxon>Archelosauria</taxon>
        <taxon>Archosauria</taxon>
        <taxon>Dinosauria</taxon>
        <taxon>Saurischia</taxon>
        <taxon>Theropoda</taxon>
        <taxon>Coelurosauria</taxon>
        <taxon>Aves</taxon>
        <taxon>Neognathae</taxon>
        <taxon>Galloanserae</taxon>
        <taxon>Galliformes</taxon>
        <taxon>Phasianidae</taxon>
        <taxon>Phasianinae</taxon>
        <taxon>Gallus</taxon>
    </lineage>
</organism>
<comment type="catalytic activity">
    <reaction>
        <text>Preferential cleavage: Arg-|-Xaa, Lys-|-Xaa.</text>
        <dbReference type="EC" id="3.4.21.4"/>
    </reaction>
</comment>
<comment type="cofactor">
    <cofactor evidence="1">
        <name>Ca(2+)</name>
        <dbReference type="ChEBI" id="CHEBI:29108"/>
    </cofactor>
    <text evidence="1">Binds 1 Ca(2+) ion per subunit.</text>
</comment>
<comment type="subcellular location">
    <subcellularLocation>
        <location>Secreted</location>
        <location>Extracellular space</location>
    </subcellularLocation>
</comment>
<comment type="tissue specificity">
    <text>High levels are seen in the pancreas while lower levels are found in the liver, spleen and thymus.</text>
</comment>
<comment type="similarity">
    <text evidence="2">Belongs to the peptidase S1 family.</text>
</comment>
<evidence type="ECO:0000250" key="1"/>
<evidence type="ECO:0000255" key="2">
    <source>
        <dbReference type="PROSITE-ProRule" id="PRU00274"/>
    </source>
</evidence>
<accession>Q90627</accession>